<sequence length="343" mass="37018">MDENKKRALSAALSQIEKQFGKGSVMRMGDRVIEAVEVIPTGSLMLDIALGIGGLPKGRVVEIYGPESSGKTTLTLQAIAECQKLGGTAAFIDAEHALDPIYAAKLGVNVDDLLLSQPDTGEQALEIADMLVRSSSVDIVVIDSVAALTPKAEIEGEMGDQLPGLQARLMSQALRKLTGNIKRSNTLVVFINQLRMKIGVMMPGQSPEVTTGGNALKFYASVRLDIRRIGAIKKGDEIIGNQTKIKVVKNKLAPPFKQVITEILYGEGISREGELIDMGVEAKLVDKAGAWYSYGDERIGQGKDNARGYLRDNPQVAIKLEAELREKFQPAEAPREAGETESE</sequence>
<feature type="chain" id="PRO_1000114382" description="Protein RecA">
    <location>
        <begin position="1"/>
        <end position="343"/>
    </location>
</feature>
<feature type="binding site" evidence="1">
    <location>
        <begin position="65"/>
        <end position="72"/>
    </location>
    <ligand>
        <name>ATP</name>
        <dbReference type="ChEBI" id="CHEBI:30616"/>
    </ligand>
</feature>
<protein>
    <recommendedName>
        <fullName evidence="1">Protein RecA</fullName>
    </recommendedName>
    <alternativeName>
        <fullName evidence="1">Recombinase A</fullName>
    </alternativeName>
</protein>
<proteinExistence type="inferred from homology"/>
<gene>
    <name evidence="1" type="primary">recA</name>
    <name type="ordered locus">xcc-b100_2537</name>
</gene>
<evidence type="ECO:0000255" key="1">
    <source>
        <dbReference type="HAMAP-Rule" id="MF_00268"/>
    </source>
</evidence>
<comment type="function">
    <text evidence="1">Can catalyze the hydrolysis of ATP in the presence of single-stranded DNA, the ATP-dependent uptake of single-stranded DNA by duplex DNA, and the ATP-dependent hybridization of homologous single-stranded DNAs. It interacts with LexA causing its activation and leading to its autocatalytic cleavage.</text>
</comment>
<comment type="subcellular location">
    <subcellularLocation>
        <location evidence="1">Cytoplasm</location>
    </subcellularLocation>
</comment>
<comment type="similarity">
    <text evidence="1">Belongs to the RecA family.</text>
</comment>
<name>RECA_XANCB</name>
<dbReference type="EMBL" id="AM920689">
    <property type="protein sequence ID" value="CAP51897.1"/>
    <property type="molecule type" value="Genomic_DNA"/>
</dbReference>
<dbReference type="SMR" id="B0RTY3"/>
<dbReference type="KEGG" id="xca:xcc-b100_2537"/>
<dbReference type="HOGENOM" id="CLU_040469_1_2_6"/>
<dbReference type="Proteomes" id="UP000001188">
    <property type="component" value="Chromosome"/>
</dbReference>
<dbReference type="GO" id="GO:0005829">
    <property type="term" value="C:cytosol"/>
    <property type="evidence" value="ECO:0007669"/>
    <property type="project" value="TreeGrafter"/>
</dbReference>
<dbReference type="GO" id="GO:0005524">
    <property type="term" value="F:ATP binding"/>
    <property type="evidence" value="ECO:0007669"/>
    <property type="project" value="UniProtKB-UniRule"/>
</dbReference>
<dbReference type="GO" id="GO:0016887">
    <property type="term" value="F:ATP hydrolysis activity"/>
    <property type="evidence" value="ECO:0007669"/>
    <property type="project" value="InterPro"/>
</dbReference>
<dbReference type="GO" id="GO:0140664">
    <property type="term" value="F:ATP-dependent DNA damage sensor activity"/>
    <property type="evidence" value="ECO:0007669"/>
    <property type="project" value="InterPro"/>
</dbReference>
<dbReference type="GO" id="GO:0003684">
    <property type="term" value="F:damaged DNA binding"/>
    <property type="evidence" value="ECO:0007669"/>
    <property type="project" value="UniProtKB-UniRule"/>
</dbReference>
<dbReference type="GO" id="GO:0003697">
    <property type="term" value="F:single-stranded DNA binding"/>
    <property type="evidence" value="ECO:0007669"/>
    <property type="project" value="UniProtKB-UniRule"/>
</dbReference>
<dbReference type="GO" id="GO:0006310">
    <property type="term" value="P:DNA recombination"/>
    <property type="evidence" value="ECO:0007669"/>
    <property type="project" value="UniProtKB-UniRule"/>
</dbReference>
<dbReference type="GO" id="GO:0006281">
    <property type="term" value="P:DNA repair"/>
    <property type="evidence" value="ECO:0007669"/>
    <property type="project" value="UniProtKB-UniRule"/>
</dbReference>
<dbReference type="GO" id="GO:0009432">
    <property type="term" value="P:SOS response"/>
    <property type="evidence" value="ECO:0007669"/>
    <property type="project" value="UniProtKB-UniRule"/>
</dbReference>
<dbReference type="CDD" id="cd00983">
    <property type="entry name" value="RecA"/>
    <property type="match status" value="1"/>
</dbReference>
<dbReference type="FunFam" id="3.40.50.300:FF:000087">
    <property type="entry name" value="Recombinase RecA"/>
    <property type="match status" value="1"/>
</dbReference>
<dbReference type="Gene3D" id="3.40.50.300">
    <property type="entry name" value="P-loop containing nucleotide triphosphate hydrolases"/>
    <property type="match status" value="1"/>
</dbReference>
<dbReference type="HAMAP" id="MF_00268">
    <property type="entry name" value="RecA"/>
    <property type="match status" value="1"/>
</dbReference>
<dbReference type="InterPro" id="IPR003593">
    <property type="entry name" value="AAA+_ATPase"/>
</dbReference>
<dbReference type="InterPro" id="IPR013765">
    <property type="entry name" value="DNA_recomb/repair_RecA"/>
</dbReference>
<dbReference type="InterPro" id="IPR020584">
    <property type="entry name" value="DNA_recomb/repair_RecA_CS"/>
</dbReference>
<dbReference type="InterPro" id="IPR027417">
    <property type="entry name" value="P-loop_NTPase"/>
</dbReference>
<dbReference type="InterPro" id="IPR049261">
    <property type="entry name" value="RecA-like_C"/>
</dbReference>
<dbReference type="InterPro" id="IPR049428">
    <property type="entry name" value="RecA-like_N"/>
</dbReference>
<dbReference type="InterPro" id="IPR020588">
    <property type="entry name" value="RecA_ATP-bd"/>
</dbReference>
<dbReference type="InterPro" id="IPR023400">
    <property type="entry name" value="RecA_C_sf"/>
</dbReference>
<dbReference type="InterPro" id="IPR020587">
    <property type="entry name" value="RecA_monomer-monomer_interface"/>
</dbReference>
<dbReference type="NCBIfam" id="TIGR02012">
    <property type="entry name" value="tigrfam_recA"/>
    <property type="match status" value="1"/>
</dbReference>
<dbReference type="PANTHER" id="PTHR45900:SF1">
    <property type="entry name" value="MITOCHONDRIAL DNA REPAIR PROTEIN RECA HOMOLOG-RELATED"/>
    <property type="match status" value="1"/>
</dbReference>
<dbReference type="PANTHER" id="PTHR45900">
    <property type="entry name" value="RECA"/>
    <property type="match status" value="1"/>
</dbReference>
<dbReference type="Pfam" id="PF00154">
    <property type="entry name" value="RecA"/>
    <property type="match status" value="1"/>
</dbReference>
<dbReference type="Pfam" id="PF21096">
    <property type="entry name" value="RecA_C"/>
    <property type="match status" value="1"/>
</dbReference>
<dbReference type="PRINTS" id="PR00142">
    <property type="entry name" value="RECA"/>
</dbReference>
<dbReference type="SMART" id="SM00382">
    <property type="entry name" value="AAA"/>
    <property type="match status" value="1"/>
</dbReference>
<dbReference type="SUPFAM" id="SSF52540">
    <property type="entry name" value="P-loop containing nucleoside triphosphate hydrolases"/>
    <property type="match status" value="1"/>
</dbReference>
<dbReference type="SUPFAM" id="SSF54752">
    <property type="entry name" value="RecA protein, C-terminal domain"/>
    <property type="match status" value="1"/>
</dbReference>
<dbReference type="PROSITE" id="PS00321">
    <property type="entry name" value="RECA_1"/>
    <property type="match status" value="1"/>
</dbReference>
<dbReference type="PROSITE" id="PS50162">
    <property type="entry name" value="RECA_2"/>
    <property type="match status" value="1"/>
</dbReference>
<dbReference type="PROSITE" id="PS50163">
    <property type="entry name" value="RECA_3"/>
    <property type="match status" value="1"/>
</dbReference>
<organism>
    <name type="scientific">Xanthomonas campestris pv. campestris (strain B100)</name>
    <dbReference type="NCBI Taxonomy" id="509169"/>
    <lineage>
        <taxon>Bacteria</taxon>
        <taxon>Pseudomonadati</taxon>
        <taxon>Pseudomonadota</taxon>
        <taxon>Gammaproteobacteria</taxon>
        <taxon>Lysobacterales</taxon>
        <taxon>Lysobacteraceae</taxon>
        <taxon>Xanthomonas</taxon>
    </lineage>
</organism>
<keyword id="KW-0067">ATP-binding</keyword>
<keyword id="KW-0963">Cytoplasm</keyword>
<keyword id="KW-0227">DNA damage</keyword>
<keyword id="KW-0233">DNA recombination</keyword>
<keyword id="KW-0234">DNA repair</keyword>
<keyword id="KW-0238">DNA-binding</keyword>
<keyword id="KW-0547">Nucleotide-binding</keyword>
<keyword id="KW-0742">SOS response</keyword>
<reference key="1">
    <citation type="journal article" date="2008" name="J. Biotechnol.">
        <title>The genome of Xanthomonas campestris pv. campestris B100 and its use for the reconstruction of metabolic pathways involved in xanthan biosynthesis.</title>
        <authorList>
            <person name="Vorhoelter F.-J."/>
            <person name="Schneiker S."/>
            <person name="Goesmann A."/>
            <person name="Krause L."/>
            <person name="Bekel T."/>
            <person name="Kaiser O."/>
            <person name="Linke B."/>
            <person name="Patschkowski T."/>
            <person name="Rueckert C."/>
            <person name="Schmid J."/>
            <person name="Sidhu V.K."/>
            <person name="Sieber V."/>
            <person name="Tauch A."/>
            <person name="Watt S.A."/>
            <person name="Weisshaar B."/>
            <person name="Becker A."/>
            <person name="Niehaus K."/>
            <person name="Puehler A."/>
        </authorList>
    </citation>
    <scope>NUCLEOTIDE SEQUENCE [LARGE SCALE GENOMIC DNA]</scope>
    <source>
        <strain>B100</strain>
    </source>
</reference>
<accession>B0RTY3</accession>